<sequence length="110" mass="11439">MLSLAKIAALFVLTAVAEIVGCYLPWLVLKAGKPAWLLAPAALSLALFAWLLTLHPAAAARTYAAYGGVYIAVALAWLRIVDGVPLSRWDVAGAALALAGMSVIALQPRG</sequence>
<reference key="1">
    <citation type="journal article" date="2004" name="Proc. Natl. Acad. Sci. U.S.A.">
        <title>Structural flexibility in the Burkholderia mallei genome.</title>
        <authorList>
            <person name="Nierman W.C."/>
            <person name="DeShazer D."/>
            <person name="Kim H.S."/>
            <person name="Tettelin H."/>
            <person name="Nelson K.E."/>
            <person name="Feldblyum T.V."/>
            <person name="Ulrich R.L."/>
            <person name="Ronning C.M."/>
            <person name="Brinkac L.M."/>
            <person name="Daugherty S.C."/>
            <person name="Davidsen T.D."/>
            <person name="DeBoy R.T."/>
            <person name="Dimitrov G."/>
            <person name="Dodson R.J."/>
            <person name="Durkin A.S."/>
            <person name="Gwinn M.L."/>
            <person name="Haft D.H."/>
            <person name="Khouri H.M."/>
            <person name="Kolonay J.F."/>
            <person name="Madupu R."/>
            <person name="Mohammoud Y."/>
            <person name="Nelson W.C."/>
            <person name="Radune D."/>
            <person name="Romero C.M."/>
            <person name="Sarria S."/>
            <person name="Selengut J."/>
            <person name="Shamblin C."/>
            <person name="Sullivan S.A."/>
            <person name="White O."/>
            <person name="Yu Y."/>
            <person name="Zafar N."/>
            <person name="Zhou L."/>
            <person name="Fraser C.M."/>
        </authorList>
    </citation>
    <scope>NUCLEOTIDE SEQUENCE [LARGE SCALE GENOMIC DNA]</scope>
    <source>
        <strain>ATCC 23344</strain>
    </source>
</reference>
<proteinExistence type="inferred from homology"/>
<organism>
    <name type="scientific">Burkholderia mallei (strain ATCC 23344)</name>
    <dbReference type="NCBI Taxonomy" id="243160"/>
    <lineage>
        <taxon>Bacteria</taxon>
        <taxon>Pseudomonadati</taxon>
        <taxon>Pseudomonadota</taxon>
        <taxon>Betaproteobacteria</taxon>
        <taxon>Burkholderiales</taxon>
        <taxon>Burkholderiaceae</taxon>
        <taxon>Burkholderia</taxon>
        <taxon>pseudomallei group</taxon>
    </lineage>
</organism>
<name>Y761_BURMA</name>
<dbReference type="EMBL" id="CP000010">
    <property type="protein sequence ID" value="AAU49150.1"/>
    <property type="molecule type" value="Genomic_DNA"/>
</dbReference>
<dbReference type="RefSeq" id="WP_004193459.1">
    <property type="nucleotide sequence ID" value="NC_006348.1"/>
</dbReference>
<dbReference type="RefSeq" id="YP_102524.1">
    <property type="nucleotide sequence ID" value="NC_006348.1"/>
</dbReference>
<dbReference type="SMR" id="Q62L95"/>
<dbReference type="KEGG" id="bma:BMA0761"/>
<dbReference type="PATRIC" id="fig|243160.12.peg.783"/>
<dbReference type="eggNOG" id="COG1742">
    <property type="taxonomic scope" value="Bacteria"/>
</dbReference>
<dbReference type="HOGENOM" id="CLU_117653_2_0_4"/>
<dbReference type="Proteomes" id="UP000006693">
    <property type="component" value="Chromosome 1"/>
</dbReference>
<dbReference type="GO" id="GO:0005886">
    <property type="term" value="C:plasma membrane"/>
    <property type="evidence" value="ECO:0007669"/>
    <property type="project" value="UniProtKB-SubCell"/>
</dbReference>
<dbReference type="HAMAP" id="MF_00010">
    <property type="entry name" value="UPF0060"/>
    <property type="match status" value="1"/>
</dbReference>
<dbReference type="InterPro" id="IPR003844">
    <property type="entry name" value="UPF0060"/>
</dbReference>
<dbReference type="NCBIfam" id="NF002586">
    <property type="entry name" value="PRK02237.1"/>
    <property type="match status" value="1"/>
</dbReference>
<dbReference type="PANTHER" id="PTHR36116">
    <property type="entry name" value="UPF0060 MEMBRANE PROTEIN YNFA"/>
    <property type="match status" value="1"/>
</dbReference>
<dbReference type="PANTHER" id="PTHR36116:SF1">
    <property type="entry name" value="UPF0060 MEMBRANE PROTEIN YNFA"/>
    <property type="match status" value="1"/>
</dbReference>
<dbReference type="Pfam" id="PF02694">
    <property type="entry name" value="UPF0060"/>
    <property type="match status" value="1"/>
</dbReference>
<dbReference type="SUPFAM" id="SSF103481">
    <property type="entry name" value="Multidrug resistance efflux transporter EmrE"/>
    <property type="match status" value="1"/>
</dbReference>
<feature type="chain" id="PRO_0000282210" description="UPF0060 membrane protein BMA0761">
    <location>
        <begin position="1"/>
        <end position="110"/>
    </location>
</feature>
<feature type="transmembrane region" description="Helical" evidence="1">
    <location>
        <begin position="9"/>
        <end position="29"/>
    </location>
</feature>
<feature type="transmembrane region" description="Helical" evidence="1">
    <location>
        <begin position="34"/>
        <end position="54"/>
    </location>
</feature>
<feature type="transmembrane region" description="Helical" evidence="1">
    <location>
        <begin position="64"/>
        <end position="84"/>
    </location>
</feature>
<feature type="transmembrane region" description="Helical" evidence="1">
    <location>
        <begin position="86"/>
        <end position="106"/>
    </location>
</feature>
<comment type="subcellular location">
    <subcellularLocation>
        <location evidence="1">Cell inner membrane</location>
        <topology evidence="1">Multi-pass membrane protein</topology>
    </subcellularLocation>
</comment>
<comment type="similarity">
    <text evidence="1">Belongs to the UPF0060 family.</text>
</comment>
<gene>
    <name type="ordered locus">BMA0761</name>
</gene>
<evidence type="ECO:0000255" key="1">
    <source>
        <dbReference type="HAMAP-Rule" id="MF_00010"/>
    </source>
</evidence>
<keyword id="KW-0997">Cell inner membrane</keyword>
<keyword id="KW-1003">Cell membrane</keyword>
<keyword id="KW-0472">Membrane</keyword>
<keyword id="KW-1185">Reference proteome</keyword>
<keyword id="KW-0812">Transmembrane</keyword>
<keyword id="KW-1133">Transmembrane helix</keyword>
<accession>Q62L95</accession>
<protein>
    <recommendedName>
        <fullName evidence="1">UPF0060 membrane protein BMA0761</fullName>
    </recommendedName>
</protein>